<feature type="chain" id="PRO_0000198894" description="Ras-related protein Rac2">
    <location>
        <begin position="1"/>
        <end position="189"/>
    </location>
</feature>
<feature type="propeptide" id="PRO_0000281245" description="Removed in mature form" evidence="1">
    <location>
        <begin position="190"/>
        <end position="192"/>
    </location>
</feature>
<feature type="short sequence motif" description="Effector region" evidence="2">
    <location>
        <begin position="32"/>
        <end position="40"/>
    </location>
</feature>
<feature type="binding site" evidence="1">
    <location>
        <begin position="10"/>
        <end position="17"/>
    </location>
    <ligand>
        <name>GTP</name>
        <dbReference type="ChEBI" id="CHEBI:37565"/>
    </ligand>
</feature>
<feature type="binding site" evidence="1">
    <location>
        <begin position="57"/>
        <end position="61"/>
    </location>
    <ligand>
        <name>GTP</name>
        <dbReference type="ChEBI" id="CHEBI:37565"/>
    </ligand>
</feature>
<feature type="binding site" evidence="1">
    <location>
        <begin position="115"/>
        <end position="118"/>
    </location>
    <ligand>
        <name>GTP</name>
        <dbReference type="ChEBI" id="CHEBI:37565"/>
    </ligand>
</feature>
<feature type="modified residue" description="Cysteine methyl ester" evidence="1">
    <location>
        <position position="189"/>
    </location>
</feature>
<feature type="lipid moiety-binding region" description="S-geranylgeranyl cysteine" evidence="1">
    <location>
        <position position="189"/>
    </location>
</feature>
<evidence type="ECO:0000250" key="1"/>
<evidence type="ECO:0000255" key="2"/>
<evidence type="ECO:0000269" key="3">
    <source>
    </source>
</evidence>
<evidence type="ECO:0000269" key="4">
    <source>
    </source>
</evidence>
<evidence type="ECO:0000305" key="5"/>
<name>RAC2_DROME</name>
<protein>
    <recommendedName>
        <fullName>Ras-related protein Rac2</fullName>
    </recommendedName>
</protein>
<organism>
    <name type="scientific">Drosophila melanogaster</name>
    <name type="common">Fruit fly</name>
    <dbReference type="NCBI Taxonomy" id="7227"/>
    <lineage>
        <taxon>Eukaryota</taxon>
        <taxon>Metazoa</taxon>
        <taxon>Ecdysozoa</taxon>
        <taxon>Arthropoda</taxon>
        <taxon>Hexapoda</taxon>
        <taxon>Insecta</taxon>
        <taxon>Pterygota</taxon>
        <taxon>Neoptera</taxon>
        <taxon>Endopterygota</taxon>
        <taxon>Diptera</taxon>
        <taxon>Brachycera</taxon>
        <taxon>Muscomorpha</taxon>
        <taxon>Ephydroidea</taxon>
        <taxon>Drosophilidae</taxon>
        <taxon>Drosophila</taxon>
        <taxon>Sophophora</taxon>
    </lineage>
</organism>
<reference key="1">
    <citation type="journal article" date="1995" name="EMBO J.">
        <title>Characterization of rho GTPase family homologues in Drosophila melanogaster: overexpressing Rho1 in retinal cells causes a late developmental defect.</title>
        <authorList>
            <person name="Hariharan I.K."/>
            <person name="Hu K.-Q."/>
            <person name="Asha H."/>
            <person name="Quintanilla A."/>
            <person name="Ezzell R.M."/>
            <person name="Settleman J."/>
        </authorList>
    </citation>
    <scope>NUCLEOTIDE SEQUENCE [MRNA]</scope>
</reference>
<reference key="2">
    <citation type="journal article" date="1995" name="Development">
        <title>A dominant inhibitory version of the small GTP-binding protein Rac disrupts cytoskeletal structures and inhibits developmental cell shape changes in Drosophila.</title>
        <authorList>
            <person name="Harden N."/>
            <person name="Loh H."/>
            <person name="Chia W."/>
            <person name="Lim L."/>
        </authorList>
    </citation>
    <scope>NUCLEOTIDE SEQUENCE [MRNA]</scope>
    <source>
        <strain>Canton-S</strain>
    </source>
</reference>
<reference key="3">
    <citation type="journal article" date="2000" name="Science">
        <title>The genome sequence of Drosophila melanogaster.</title>
        <authorList>
            <person name="Adams M.D."/>
            <person name="Celniker S.E."/>
            <person name="Holt R.A."/>
            <person name="Evans C.A."/>
            <person name="Gocayne J.D."/>
            <person name="Amanatides P.G."/>
            <person name="Scherer S.E."/>
            <person name="Li P.W."/>
            <person name="Hoskins R.A."/>
            <person name="Galle R.F."/>
            <person name="George R.A."/>
            <person name="Lewis S.E."/>
            <person name="Richards S."/>
            <person name="Ashburner M."/>
            <person name="Henderson S.N."/>
            <person name="Sutton G.G."/>
            <person name="Wortman J.R."/>
            <person name="Yandell M.D."/>
            <person name="Zhang Q."/>
            <person name="Chen L.X."/>
            <person name="Brandon R.C."/>
            <person name="Rogers Y.-H.C."/>
            <person name="Blazej R.G."/>
            <person name="Champe M."/>
            <person name="Pfeiffer B.D."/>
            <person name="Wan K.H."/>
            <person name="Doyle C."/>
            <person name="Baxter E.G."/>
            <person name="Helt G."/>
            <person name="Nelson C.R."/>
            <person name="Miklos G.L.G."/>
            <person name="Abril J.F."/>
            <person name="Agbayani A."/>
            <person name="An H.-J."/>
            <person name="Andrews-Pfannkoch C."/>
            <person name="Baldwin D."/>
            <person name="Ballew R.M."/>
            <person name="Basu A."/>
            <person name="Baxendale J."/>
            <person name="Bayraktaroglu L."/>
            <person name="Beasley E.M."/>
            <person name="Beeson K.Y."/>
            <person name="Benos P.V."/>
            <person name="Berman B.P."/>
            <person name="Bhandari D."/>
            <person name="Bolshakov S."/>
            <person name="Borkova D."/>
            <person name="Botchan M.R."/>
            <person name="Bouck J."/>
            <person name="Brokstein P."/>
            <person name="Brottier P."/>
            <person name="Burtis K.C."/>
            <person name="Busam D.A."/>
            <person name="Butler H."/>
            <person name="Cadieu E."/>
            <person name="Center A."/>
            <person name="Chandra I."/>
            <person name="Cherry J.M."/>
            <person name="Cawley S."/>
            <person name="Dahlke C."/>
            <person name="Davenport L.B."/>
            <person name="Davies P."/>
            <person name="de Pablos B."/>
            <person name="Delcher A."/>
            <person name="Deng Z."/>
            <person name="Mays A.D."/>
            <person name="Dew I."/>
            <person name="Dietz S.M."/>
            <person name="Dodson K."/>
            <person name="Doup L.E."/>
            <person name="Downes M."/>
            <person name="Dugan-Rocha S."/>
            <person name="Dunkov B.C."/>
            <person name="Dunn P."/>
            <person name="Durbin K.J."/>
            <person name="Evangelista C.C."/>
            <person name="Ferraz C."/>
            <person name="Ferriera S."/>
            <person name="Fleischmann W."/>
            <person name="Fosler C."/>
            <person name="Gabrielian A.E."/>
            <person name="Garg N.S."/>
            <person name="Gelbart W.M."/>
            <person name="Glasser K."/>
            <person name="Glodek A."/>
            <person name="Gong F."/>
            <person name="Gorrell J.H."/>
            <person name="Gu Z."/>
            <person name="Guan P."/>
            <person name="Harris M."/>
            <person name="Harris N.L."/>
            <person name="Harvey D.A."/>
            <person name="Heiman T.J."/>
            <person name="Hernandez J.R."/>
            <person name="Houck J."/>
            <person name="Hostin D."/>
            <person name="Houston K.A."/>
            <person name="Howland T.J."/>
            <person name="Wei M.-H."/>
            <person name="Ibegwam C."/>
            <person name="Jalali M."/>
            <person name="Kalush F."/>
            <person name="Karpen G.H."/>
            <person name="Ke Z."/>
            <person name="Kennison J.A."/>
            <person name="Ketchum K.A."/>
            <person name="Kimmel B.E."/>
            <person name="Kodira C.D."/>
            <person name="Kraft C.L."/>
            <person name="Kravitz S."/>
            <person name="Kulp D."/>
            <person name="Lai Z."/>
            <person name="Lasko P."/>
            <person name="Lei Y."/>
            <person name="Levitsky A.A."/>
            <person name="Li J.H."/>
            <person name="Li Z."/>
            <person name="Liang Y."/>
            <person name="Lin X."/>
            <person name="Liu X."/>
            <person name="Mattei B."/>
            <person name="McIntosh T.C."/>
            <person name="McLeod M.P."/>
            <person name="McPherson D."/>
            <person name="Merkulov G."/>
            <person name="Milshina N.V."/>
            <person name="Mobarry C."/>
            <person name="Morris J."/>
            <person name="Moshrefi A."/>
            <person name="Mount S.M."/>
            <person name="Moy M."/>
            <person name="Murphy B."/>
            <person name="Murphy L."/>
            <person name="Muzny D.M."/>
            <person name="Nelson D.L."/>
            <person name="Nelson D.R."/>
            <person name="Nelson K.A."/>
            <person name="Nixon K."/>
            <person name="Nusskern D.R."/>
            <person name="Pacleb J.M."/>
            <person name="Palazzolo M."/>
            <person name="Pittman G.S."/>
            <person name="Pan S."/>
            <person name="Pollard J."/>
            <person name="Puri V."/>
            <person name="Reese M.G."/>
            <person name="Reinert K."/>
            <person name="Remington K."/>
            <person name="Saunders R.D.C."/>
            <person name="Scheeler F."/>
            <person name="Shen H."/>
            <person name="Shue B.C."/>
            <person name="Siden-Kiamos I."/>
            <person name="Simpson M."/>
            <person name="Skupski M.P."/>
            <person name="Smith T.J."/>
            <person name="Spier E."/>
            <person name="Spradling A.C."/>
            <person name="Stapleton M."/>
            <person name="Strong R."/>
            <person name="Sun E."/>
            <person name="Svirskas R."/>
            <person name="Tector C."/>
            <person name="Turner R."/>
            <person name="Venter E."/>
            <person name="Wang A.H."/>
            <person name="Wang X."/>
            <person name="Wang Z.-Y."/>
            <person name="Wassarman D.A."/>
            <person name="Weinstock G.M."/>
            <person name="Weissenbach J."/>
            <person name="Williams S.M."/>
            <person name="Woodage T."/>
            <person name="Worley K.C."/>
            <person name="Wu D."/>
            <person name="Yang S."/>
            <person name="Yao Q.A."/>
            <person name="Ye J."/>
            <person name="Yeh R.-F."/>
            <person name="Zaveri J.S."/>
            <person name="Zhan M."/>
            <person name="Zhang G."/>
            <person name="Zhao Q."/>
            <person name="Zheng L."/>
            <person name="Zheng X.H."/>
            <person name="Zhong F.N."/>
            <person name="Zhong W."/>
            <person name="Zhou X."/>
            <person name="Zhu S.C."/>
            <person name="Zhu X."/>
            <person name="Smith H.O."/>
            <person name="Gibbs R.A."/>
            <person name="Myers E.W."/>
            <person name="Rubin G.M."/>
            <person name="Venter J.C."/>
        </authorList>
    </citation>
    <scope>NUCLEOTIDE SEQUENCE [LARGE SCALE GENOMIC DNA]</scope>
    <source>
        <strain>Berkeley</strain>
    </source>
</reference>
<reference key="4">
    <citation type="journal article" date="2002" name="Genome Biol.">
        <title>Annotation of the Drosophila melanogaster euchromatic genome: a systematic review.</title>
        <authorList>
            <person name="Misra S."/>
            <person name="Crosby M.A."/>
            <person name="Mungall C.J."/>
            <person name="Matthews B.B."/>
            <person name="Campbell K.S."/>
            <person name="Hradecky P."/>
            <person name="Huang Y."/>
            <person name="Kaminker J.S."/>
            <person name="Millburn G.H."/>
            <person name="Prochnik S.E."/>
            <person name="Smith C.D."/>
            <person name="Tupy J.L."/>
            <person name="Whitfield E.J."/>
            <person name="Bayraktaroglu L."/>
            <person name="Berman B.P."/>
            <person name="Bettencourt B.R."/>
            <person name="Celniker S.E."/>
            <person name="de Grey A.D.N.J."/>
            <person name="Drysdale R.A."/>
            <person name="Harris N.L."/>
            <person name="Richter J."/>
            <person name="Russo S."/>
            <person name="Schroeder A.J."/>
            <person name="Shu S.Q."/>
            <person name="Stapleton M."/>
            <person name="Yamada C."/>
            <person name="Ashburner M."/>
            <person name="Gelbart W.M."/>
            <person name="Rubin G.M."/>
            <person name="Lewis S.E."/>
        </authorList>
    </citation>
    <scope>GENOME REANNOTATION</scope>
    <source>
        <strain>Berkeley</strain>
    </source>
</reference>
<reference key="5">
    <citation type="journal article" date="2002" name="Genome Biol.">
        <title>A Drosophila full-length cDNA resource.</title>
        <authorList>
            <person name="Stapleton M."/>
            <person name="Carlson J.W."/>
            <person name="Brokstein P."/>
            <person name="Yu C."/>
            <person name="Champe M."/>
            <person name="George R.A."/>
            <person name="Guarin H."/>
            <person name="Kronmiller B."/>
            <person name="Pacleb J.M."/>
            <person name="Park S."/>
            <person name="Wan K.H."/>
            <person name="Rubin G.M."/>
            <person name="Celniker S.E."/>
        </authorList>
    </citation>
    <scope>NUCLEOTIDE SEQUENCE [LARGE SCALE MRNA]</scope>
    <source>
        <strain>Berkeley</strain>
        <tissue>Ovary</tissue>
    </source>
</reference>
<reference key="6">
    <citation type="journal article" date="1999" name="Genes Dev.">
        <title>The Drosophila Pkn protein kinase is a Rho/Rac effector target required for dorsal closure during embryogenesis.</title>
        <authorList>
            <person name="Lu Y."/>
            <person name="Settleman J."/>
        </authorList>
    </citation>
    <scope>INTERACTION WITH PKN</scope>
</reference>
<reference key="7">
    <citation type="journal article" date="2012" name="J. Biol. Chem.">
        <title>Independent recognition of Staphylococcus aureus by two receptors for phagocytosis in Drosophila.</title>
        <authorList>
            <person name="Shiratsuchi A."/>
            <person name="Mori T."/>
            <person name="Sakurai K."/>
            <person name="Nagaosa K."/>
            <person name="Sekimizu K."/>
            <person name="Lee B.L."/>
            <person name="Nakanishi Y."/>
        </authorList>
    </citation>
    <scope>FUNCTION</scope>
</reference>
<sequence length="192" mass="21359">MQAIKCVVVGDGAVGKTCLLISYTTNAFPGEYIPTVFDNYSANVMVDAKPINLGLWDTAGQEDYDRLRPLSYPQTDVFLICFSLVNPASFENVRAKWFPEVRHHCPSVPIILVGTKLDLRDDKQTIEKLKDKKLTPITYPQGLAMAKEIAAVKYLECSALTQKGLKTVFDEAIRSVLCPVVRGPKRHKCALL</sequence>
<accession>P48554</accession>
<accession>Q540X5</accession>
<accession>Q9VS69</accession>
<proteinExistence type="evidence at protein level"/>
<comment type="function">
    <text evidence="4">Involved in integrin alpha-PS3/beta-nu-mediated phagocytosis of Gram-positive S.aureus by hemocytes.</text>
</comment>
<comment type="subunit">
    <text evidence="3">Interacts with Pkn (via N-terminus).</text>
</comment>
<comment type="interaction">
    <interactant intactId="EBI-74869">
        <id>P48554</id>
    </interactant>
    <interactant intactId="EBI-74826">
        <id>Q9VI13</id>
        <label>Pak</label>
    </interactant>
    <organismsDiffer>false</organismsDiffer>
    <experiments>3</experiments>
</comment>
<comment type="subcellular location">
    <subcellularLocation>
        <location evidence="5">Cell membrane</location>
        <topology evidence="5">Lipid-anchor</topology>
        <orientation evidence="5">Cytoplasmic side</orientation>
    </subcellularLocation>
</comment>
<gene>
    <name type="primary">Rac2</name>
    <name type="synonym">RacB</name>
    <name type="ORF">CG8556</name>
</gene>
<keyword id="KW-1003">Cell membrane</keyword>
<keyword id="KW-0217">Developmental protein</keyword>
<keyword id="KW-0342">GTP-binding</keyword>
<keyword id="KW-0449">Lipoprotein</keyword>
<keyword id="KW-0472">Membrane</keyword>
<keyword id="KW-0488">Methylation</keyword>
<keyword id="KW-0547">Nucleotide-binding</keyword>
<keyword id="KW-0581">Phagocytosis</keyword>
<keyword id="KW-0636">Prenylation</keyword>
<keyword id="KW-1185">Reference proteome</keyword>
<dbReference type="EMBL" id="L38310">
    <property type="protein sequence ID" value="AAA67041.1"/>
    <property type="molecule type" value="mRNA"/>
</dbReference>
<dbReference type="EMBL" id="Z35643">
    <property type="protein sequence ID" value="CAA84710.1"/>
    <property type="molecule type" value="mRNA"/>
</dbReference>
<dbReference type="EMBL" id="AE014296">
    <property type="protein sequence ID" value="AAF50559.1"/>
    <property type="molecule type" value="Genomic_DNA"/>
</dbReference>
<dbReference type="EMBL" id="AY118845">
    <property type="protein sequence ID" value="AAM50705.1"/>
    <property type="molecule type" value="mRNA"/>
</dbReference>
<dbReference type="PIR" id="S54296">
    <property type="entry name" value="S54296"/>
</dbReference>
<dbReference type="RefSeq" id="NP_001261517.1">
    <property type="nucleotide sequence ID" value="NM_001274588.2"/>
</dbReference>
<dbReference type="RefSeq" id="NP_648121.1">
    <property type="nucleotide sequence ID" value="NM_139864.3"/>
</dbReference>
<dbReference type="SMR" id="P48554"/>
<dbReference type="BioGRID" id="64269">
    <property type="interactions" value="25"/>
</dbReference>
<dbReference type="DIP" id="DIP-18225N"/>
<dbReference type="FunCoup" id="P48554">
    <property type="interactions" value="704"/>
</dbReference>
<dbReference type="IntAct" id="P48554">
    <property type="interactions" value="8"/>
</dbReference>
<dbReference type="STRING" id="7227.FBpp0305023"/>
<dbReference type="PaxDb" id="7227-FBpp0305023"/>
<dbReference type="EnsemblMetazoa" id="FBtr0076867">
    <property type="protein sequence ID" value="FBpp0076577"/>
    <property type="gene ID" value="FBgn0014011"/>
</dbReference>
<dbReference type="EnsemblMetazoa" id="FBtr0332800">
    <property type="protein sequence ID" value="FBpp0305023"/>
    <property type="gene ID" value="FBgn0014011"/>
</dbReference>
<dbReference type="GeneID" id="38831"/>
<dbReference type="KEGG" id="dme:Dmel_CG8556"/>
<dbReference type="AGR" id="FB:FBgn0014011"/>
<dbReference type="CTD" id="5880"/>
<dbReference type="FlyBase" id="FBgn0014011">
    <property type="gene designation" value="Rac2"/>
</dbReference>
<dbReference type="VEuPathDB" id="VectorBase:FBgn0014011"/>
<dbReference type="eggNOG" id="KOG0393">
    <property type="taxonomic scope" value="Eukaryota"/>
</dbReference>
<dbReference type="GeneTree" id="ENSGT00940000155205"/>
<dbReference type="HOGENOM" id="CLU_041217_21_3_1"/>
<dbReference type="InParanoid" id="P48554"/>
<dbReference type="OMA" id="PFCDVFL"/>
<dbReference type="OrthoDB" id="8830751at2759"/>
<dbReference type="PhylomeDB" id="P48554"/>
<dbReference type="Reactome" id="R-DME-114604">
    <property type="pathway name" value="GPVI-mediated activation cascade"/>
</dbReference>
<dbReference type="Reactome" id="R-DME-4086400">
    <property type="pathway name" value="PCP/CE pathway"/>
</dbReference>
<dbReference type="Reactome" id="R-DME-6798695">
    <property type="pathway name" value="Neutrophil degranulation"/>
</dbReference>
<dbReference type="Reactome" id="R-DME-9013404">
    <property type="pathway name" value="RAC2 GTPase cycle"/>
</dbReference>
<dbReference type="Reactome" id="R-DME-9013407">
    <property type="pathway name" value="RHOH GTPase cycle"/>
</dbReference>
<dbReference type="Reactome" id="R-DME-9013408">
    <property type="pathway name" value="RHOG GTPase cycle"/>
</dbReference>
<dbReference type="SignaLink" id="P48554"/>
<dbReference type="BioGRID-ORCS" id="38831">
    <property type="hits" value="0 hits in 3 CRISPR screens"/>
</dbReference>
<dbReference type="GenomeRNAi" id="38831"/>
<dbReference type="PRO" id="PR:P48554"/>
<dbReference type="Proteomes" id="UP000000803">
    <property type="component" value="Chromosome 3L"/>
</dbReference>
<dbReference type="Bgee" id="FBgn0014011">
    <property type="expression patterns" value="Expressed in hemocyte (sensu Nematoda and Protostomia) in haltere and 229 other cell types or tissues"/>
</dbReference>
<dbReference type="ExpressionAtlas" id="P48554">
    <property type="expression patterns" value="baseline and differential"/>
</dbReference>
<dbReference type="GO" id="GO:0042995">
    <property type="term" value="C:cell projection"/>
    <property type="evidence" value="ECO:0000318"/>
    <property type="project" value="GO_Central"/>
</dbReference>
<dbReference type="GO" id="GO:0031410">
    <property type="term" value="C:cytoplasmic vesicle"/>
    <property type="evidence" value="ECO:0000318"/>
    <property type="project" value="GO_Central"/>
</dbReference>
<dbReference type="GO" id="GO:0005856">
    <property type="term" value="C:cytoskeleton"/>
    <property type="evidence" value="ECO:0000318"/>
    <property type="project" value="GO_Central"/>
</dbReference>
<dbReference type="GO" id="GO:0005886">
    <property type="term" value="C:plasma membrane"/>
    <property type="evidence" value="ECO:0000318"/>
    <property type="project" value="GO_Central"/>
</dbReference>
<dbReference type="GO" id="GO:0005525">
    <property type="term" value="F:GTP binding"/>
    <property type="evidence" value="ECO:0000318"/>
    <property type="project" value="GO_Central"/>
</dbReference>
<dbReference type="GO" id="GO:0003924">
    <property type="term" value="F:GTPase activity"/>
    <property type="evidence" value="ECO:0000316"/>
    <property type="project" value="FlyBase"/>
</dbReference>
<dbReference type="GO" id="GO:0019901">
    <property type="term" value="F:protein kinase binding"/>
    <property type="evidence" value="ECO:0000353"/>
    <property type="project" value="FlyBase"/>
</dbReference>
<dbReference type="GO" id="GO:0030036">
    <property type="term" value="P:actin cytoskeleton organization"/>
    <property type="evidence" value="ECO:0000316"/>
    <property type="project" value="FlyBase"/>
</dbReference>
<dbReference type="GO" id="GO:0051017">
    <property type="term" value="P:actin filament bundle assembly"/>
    <property type="evidence" value="ECO:0000315"/>
    <property type="project" value="FlyBase"/>
</dbReference>
<dbReference type="GO" id="GO:0007015">
    <property type="term" value="P:actin filament organization"/>
    <property type="evidence" value="ECO:0000318"/>
    <property type="project" value="GO_Central"/>
</dbReference>
<dbReference type="GO" id="GO:0002118">
    <property type="term" value="P:aggressive behavior"/>
    <property type="evidence" value="ECO:0000315"/>
    <property type="project" value="FlyBase"/>
</dbReference>
<dbReference type="GO" id="GO:0060326">
    <property type="term" value="P:cell chemotaxis"/>
    <property type="evidence" value="ECO:0000318"/>
    <property type="project" value="GO_Central"/>
</dbReference>
<dbReference type="GO" id="GO:0030031">
    <property type="term" value="P:cell projection assembly"/>
    <property type="evidence" value="ECO:0000318"/>
    <property type="project" value="GO_Central"/>
</dbReference>
<dbReference type="GO" id="GO:0030865">
    <property type="term" value="P:cortical cytoskeleton organization"/>
    <property type="evidence" value="ECO:0000318"/>
    <property type="project" value="GO_Central"/>
</dbReference>
<dbReference type="GO" id="GO:0042742">
    <property type="term" value="P:defense response to bacterium"/>
    <property type="evidence" value="ECO:0000315"/>
    <property type="project" value="FlyBase"/>
</dbReference>
<dbReference type="GO" id="GO:0046843">
    <property type="term" value="P:dorsal appendage formation"/>
    <property type="evidence" value="ECO:0000315"/>
    <property type="project" value="FlyBase"/>
</dbReference>
<dbReference type="GO" id="GO:0007391">
    <property type="term" value="P:dorsal closure"/>
    <property type="evidence" value="ECO:0000315"/>
    <property type="project" value="FlyBase"/>
</dbReference>
<dbReference type="GO" id="GO:0007394">
    <property type="term" value="P:dorsal closure, elongation of leading edge cells"/>
    <property type="evidence" value="ECO:0000315"/>
    <property type="project" value="FlyBase"/>
</dbReference>
<dbReference type="GO" id="GO:0035010">
    <property type="term" value="P:encapsulation of foreign target"/>
    <property type="evidence" value="ECO:0000315"/>
    <property type="project" value="FlyBase"/>
</dbReference>
<dbReference type="GO" id="GO:0007163">
    <property type="term" value="P:establishment or maintenance of cell polarity"/>
    <property type="evidence" value="ECO:0000318"/>
    <property type="project" value="GO_Central"/>
</dbReference>
<dbReference type="GO" id="GO:0007631">
    <property type="term" value="P:feeding behavior"/>
    <property type="evidence" value="ECO:0000315"/>
    <property type="project" value="FlyBase"/>
</dbReference>
<dbReference type="GO" id="GO:0007390">
    <property type="term" value="P:germ-band shortening"/>
    <property type="evidence" value="ECO:0000315"/>
    <property type="project" value="FlyBase"/>
</dbReference>
<dbReference type="GO" id="GO:0008258">
    <property type="term" value="P:head involution"/>
    <property type="evidence" value="ECO:0000315"/>
    <property type="project" value="FlyBase"/>
</dbReference>
<dbReference type="GO" id="GO:0035099">
    <property type="term" value="P:hemocyte migration"/>
    <property type="evidence" value="ECO:0000315"/>
    <property type="project" value="FlyBase"/>
</dbReference>
<dbReference type="GO" id="GO:0007254">
    <property type="term" value="P:JNK cascade"/>
    <property type="evidence" value="ECO:0000315"/>
    <property type="project" value="FlyBase"/>
</dbReference>
<dbReference type="GO" id="GO:0030032">
    <property type="term" value="P:lamellipodium assembly"/>
    <property type="evidence" value="ECO:0000315"/>
    <property type="project" value="FlyBase"/>
</dbReference>
<dbReference type="GO" id="GO:0007617">
    <property type="term" value="P:mating behavior"/>
    <property type="evidence" value="ECO:0000315"/>
    <property type="project" value="FlyBase"/>
</dbReference>
<dbReference type="GO" id="GO:0035011">
    <property type="term" value="P:melanotic encapsulation of foreign target"/>
    <property type="evidence" value="ECO:0000315"/>
    <property type="project" value="FlyBase"/>
</dbReference>
<dbReference type="GO" id="GO:0008078">
    <property type="term" value="P:mesodermal cell migration"/>
    <property type="evidence" value="ECO:0000316"/>
    <property type="project" value="FlyBase"/>
</dbReference>
<dbReference type="GO" id="GO:0008045">
    <property type="term" value="P:motor neuron axon guidance"/>
    <property type="evidence" value="ECO:0000318"/>
    <property type="project" value="GO_Central"/>
</dbReference>
<dbReference type="GO" id="GO:0016203">
    <property type="term" value="P:muscle attachment"/>
    <property type="evidence" value="ECO:0000316"/>
    <property type="project" value="FlyBase"/>
</dbReference>
<dbReference type="GO" id="GO:0007520">
    <property type="term" value="P:myoblast fusion"/>
    <property type="evidence" value="ECO:0000304"/>
    <property type="project" value="FlyBase"/>
</dbReference>
<dbReference type="GO" id="GO:0007424">
    <property type="term" value="P:open tracheal system development"/>
    <property type="evidence" value="ECO:0000316"/>
    <property type="project" value="FlyBase"/>
</dbReference>
<dbReference type="GO" id="GO:0006909">
    <property type="term" value="P:phagocytosis"/>
    <property type="evidence" value="ECO:0000315"/>
    <property type="project" value="FlyBase"/>
</dbReference>
<dbReference type="GO" id="GO:0006911">
    <property type="term" value="P:phagocytosis, engulfment"/>
    <property type="evidence" value="ECO:0000314"/>
    <property type="project" value="FlyBase"/>
</dbReference>
<dbReference type="GO" id="GO:0090303">
    <property type="term" value="P:positive regulation of wound healing"/>
    <property type="evidence" value="ECO:0000316"/>
    <property type="project" value="FlyBase"/>
</dbReference>
<dbReference type="GO" id="GO:0016601">
    <property type="term" value="P:Rac protein signal transduction"/>
    <property type="evidence" value="ECO:0000318"/>
    <property type="project" value="GO_Central"/>
</dbReference>
<dbReference type="GO" id="GO:0032956">
    <property type="term" value="P:regulation of actin cytoskeleton organization"/>
    <property type="evidence" value="ECO:0000318"/>
    <property type="project" value="GO_Central"/>
</dbReference>
<dbReference type="GO" id="GO:1903391">
    <property type="term" value="P:regulation of adherens junction organization"/>
    <property type="evidence" value="ECO:0000316"/>
    <property type="project" value="FlyBase"/>
</dbReference>
<dbReference type="GO" id="GO:0050770">
    <property type="term" value="P:regulation of axonogenesis"/>
    <property type="evidence" value="ECO:0000316"/>
    <property type="project" value="FlyBase"/>
</dbReference>
<dbReference type="GO" id="GO:0008360">
    <property type="term" value="P:regulation of cell shape"/>
    <property type="evidence" value="ECO:0000318"/>
    <property type="project" value="GO_Central"/>
</dbReference>
<dbReference type="GO" id="GO:0010883">
    <property type="term" value="P:regulation of lipid storage"/>
    <property type="evidence" value="ECO:0000315"/>
    <property type="project" value="FlyBase"/>
</dbReference>
<dbReference type="GO" id="GO:0007266">
    <property type="term" value="P:Rho protein signal transduction"/>
    <property type="evidence" value="ECO:0000316"/>
    <property type="project" value="FlyBase"/>
</dbReference>
<dbReference type="GO" id="GO:0007435">
    <property type="term" value="P:salivary gland morphogenesis"/>
    <property type="evidence" value="ECO:0000316"/>
    <property type="project" value="FlyBase"/>
</dbReference>
<dbReference type="GO" id="GO:0007426">
    <property type="term" value="P:tracheal outgrowth, open tracheal system"/>
    <property type="evidence" value="ECO:0000316"/>
    <property type="project" value="FlyBase"/>
</dbReference>
<dbReference type="CDD" id="cd01871">
    <property type="entry name" value="Rac1_like"/>
    <property type="match status" value="1"/>
</dbReference>
<dbReference type="FunFam" id="3.40.50.300:FF:000088">
    <property type="entry name" value="Ras-related C3 botulinum toxin substrate 1"/>
    <property type="match status" value="1"/>
</dbReference>
<dbReference type="Gene3D" id="3.40.50.300">
    <property type="entry name" value="P-loop containing nucleotide triphosphate hydrolases"/>
    <property type="match status" value="1"/>
</dbReference>
<dbReference type="InterPro" id="IPR027417">
    <property type="entry name" value="P-loop_NTPase"/>
</dbReference>
<dbReference type="InterPro" id="IPR005225">
    <property type="entry name" value="Small_GTP-bd"/>
</dbReference>
<dbReference type="InterPro" id="IPR001806">
    <property type="entry name" value="Small_GTPase"/>
</dbReference>
<dbReference type="InterPro" id="IPR003578">
    <property type="entry name" value="Small_GTPase_Rho"/>
</dbReference>
<dbReference type="NCBIfam" id="TIGR00231">
    <property type="entry name" value="small_GTP"/>
    <property type="match status" value="1"/>
</dbReference>
<dbReference type="PANTHER" id="PTHR24072">
    <property type="entry name" value="RHO FAMILY GTPASE"/>
    <property type="match status" value="1"/>
</dbReference>
<dbReference type="Pfam" id="PF00071">
    <property type="entry name" value="Ras"/>
    <property type="match status" value="1"/>
</dbReference>
<dbReference type="PRINTS" id="PR00449">
    <property type="entry name" value="RASTRNSFRMNG"/>
</dbReference>
<dbReference type="SMART" id="SM00175">
    <property type="entry name" value="RAB"/>
    <property type="match status" value="1"/>
</dbReference>
<dbReference type="SMART" id="SM00173">
    <property type="entry name" value="RAS"/>
    <property type="match status" value="1"/>
</dbReference>
<dbReference type="SMART" id="SM00174">
    <property type="entry name" value="RHO"/>
    <property type="match status" value="1"/>
</dbReference>
<dbReference type="SUPFAM" id="SSF52540">
    <property type="entry name" value="P-loop containing nucleoside triphosphate hydrolases"/>
    <property type="match status" value="1"/>
</dbReference>
<dbReference type="PROSITE" id="PS51420">
    <property type="entry name" value="RHO"/>
    <property type="match status" value="1"/>
</dbReference>